<organism>
    <name type="scientific">Homo sapiens</name>
    <name type="common">Human</name>
    <dbReference type="NCBI Taxonomy" id="9606"/>
    <lineage>
        <taxon>Eukaryota</taxon>
        <taxon>Metazoa</taxon>
        <taxon>Chordata</taxon>
        <taxon>Craniata</taxon>
        <taxon>Vertebrata</taxon>
        <taxon>Euteleostomi</taxon>
        <taxon>Mammalia</taxon>
        <taxon>Eutheria</taxon>
        <taxon>Euarchontoglires</taxon>
        <taxon>Primates</taxon>
        <taxon>Haplorrhini</taxon>
        <taxon>Catarrhini</taxon>
        <taxon>Hominidae</taxon>
        <taxon>Homo</taxon>
    </lineage>
</organism>
<gene>
    <name type="primary">JAKMIP1</name>
    <name type="synonym">GABABRBP</name>
    <name type="synonym">JAMIP1</name>
    <name type="synonym">MARLIN1</name>
</gene>
<reference key="1">
    <citation type="journal article" date="2004" name="J. Biol. Chem.">
        <title>Marlin-1, a novel RNA-binding protein associates with GABA receptors.</title>
        <authorList>
            <person name="Couve A."/>
            <person name="Restituito S."/>
            <person name="Brandon J.M."/>
            <person name="Charles K.J."/>
            <person name="Bawagan H."/>
            <person name="Freeman K.B."/>
            <person name="Pangalos M.N."/>
            <person name="Calver A.R."/>
            <person name="Moss S.J."/>
        </authorList>
    </citation>
    <scope>NUCLEOTIDE SEQUENCE [MRNA] (ISOFORM 1)</scope>
    <scope>FUNCTION</scope>
    <scope>INTERACTION WITH GABBR1</scope>
    <scope>SUBCELLULAR LOCATION</scope>
    <source>
        <tissue>Brain</tissue>
    </source>
</reference>
<reference key="2">
    <citation type="journal article" date="2007" name="Gene">
        <title>Identification and expression analysis of novel Jakmip1 transcripts.</title>
        <authorList>
            <person name="Costa V."/>
            <person name="Conte I."/>
            <person name="Ziviello C."/>
            <person name="Casamassimi A."/>
            <person name="Alfano G."/>
            <person name="Banfi S."/>
            <person name="Ciccodicola A."/>
        </authorList>
    </citation>
    <scope>NUCLEOTIDE SEQUENCE [MRNA] (ISOFORMS 2; 3; 4 AND 5)</scope>
    <scope>TISSUE SPECIFICITY</scope>
    <scope>VARIANT ARG-251</scope>
    <source>
        <tissue>Brain</tissue>
    </source>
</reference>
<reference key="3">
    <citation type="journal article" date="2004" name="Nat. Genet.">
        <title>Complete sequencing and characterization of 21,243 full-length human cDNAs.</title>
        <authorList>
            <person name="Ota T."/>
            <person name="Suzuki Y."/>
            <person name="Nishikawa T."/>
            <person name="Otsuki T."/>
            <person name="Sugiyama T."/>
            <person name="Irie R."/>
            <person name="Wakamatsu A."/>
            <person name="Hayashi K."/>
            <person name="Sato H."/>
            <person name="Nagai K."/>
            <person name="Kimura K."/>
            <person name="Makita H."/>
            <person name="Sekine M."/>
            <person name="Obayashi M."/>
            <person name="Nishi T."/>
            <person name="Shibahara T."/>
            <person name="Tanaka T."/>
            <person name="Ishii S."/>
            <person name="Yamamoto J."/>
            <person name="Saito K."/>
            <person name="Kawai Y."/>
            <person name="Isono Y."/>
            <person name="Nakamura Y."/>
            <person name="Nagahari K."/>
            <person name="Murakami K."/>
            <person name="Yasuda T."/>
            <person name="Iwayanagi T."/>
            <person name="Wagatsuma M."/>
            <person name="Shiratori A."/>
            <person name="Sudo H."/>
            <person name="Hosoiri T."/>
            <person name="Kaku Y."/>
            <person name="Kodaira H."/>
            <person name="Kondo H."/>
            <person name="Sugawara M."/>
            <person name="Takahashi M."/>
            <person name="Kanda K."/>
            <person name="Yokoi T."/>
            <person name="Furuya T."/>
            <person name="Kikkawa E."/>
            <person name="Omura Y."/>
            <person name="Abe K."/>
            <person name="Kamihara K."/>
            <person name="Katsuta N."/>
            <person name="Sato K."/>
            <person name="Tanikawa M."/>
            <person name="Yamazaki M."/>
            <person name="Ninomiya K."/>
            <person name="Ishibashi T."/>
            <person name="Yamashita H."/>
            <person name="Murakawa K."/>
            <person name="Fujimori K."/>
            <person name="Tanai H."/>
            <person name="Kimata M."/>
            <person name="Watanabe M."/>
            <person name="Hiraoka S."/>
            <person name="Chiba Y."/>
            <person name="Ishida S."/>
            <person name="Ono Y."/>
            <person name="Takiguchi S."/>
            <person name="Watanabe S."/>
            <person name="Yosida M."/>
            <person name="Hotuta T."/>
            <person name="Kusano J."/>
            <person name="Kanehori K."/>
            <person name="Takahashi-Fujii A."/>
            <person name="Hara H."/>
            <person name="Tanase T.-O."/>
            <person name="Nomura Y."/>
            <person name="Togiya S."/>
            <person name="Komai F."/>
            <person name="Hara R."/>
            <person name="Takeuchi K."/>
            <person name="Arita M."/>
            <person name="Imose N."/>
            <person name="Musashino K."/>
            <person name="Yuuki H."/>
            <person name="Oshima A."/>
            <person name="Sasaki N."/>
            <person name="Aotsuka S."/>
            <person name="Yoshikawa Y."/>
            <person name="Matsunawa H."/>
            <person name="Ichihara T."/>
            <person name="Shiohata N."/>
            <person name="Sano S."/>
            <person name="Moriya S."/>
            <person name="Momiyama H."/>
            <person name="Satoh N."/>
            <person name="Takami S."/>
            <person name="Terashima Y."/>
            <person name="Suzuki O."/>
            <person name="Nakagawa S."/>
            <person name="Senoh A."/>
            <person name="Mizoguchi H."/>
            <person name="Goto Y."/>
            <person name="Shimizu F."/>
            <person name="Wakebe H."/>
            <person name="Hishigaki H."/>
            <person name="Watanabe T."/>
            <person name="Sugiyama A."/>
            <person name="Takemoto M."/>
            <person name="Kawakami B."/>
            <person name="Yamazaki M."/>
            <person name="Watanabe K."/>
            <person name="Kumagai A."/>
            <person name="Itakura S."/>
            <person name="Fukuzumi Y."/>
            <person name="Fujimori Y."/>
            <person name="Komiyama M."/>
            <person name="Tashiro H."/>
            <person name="Tanigami A."/>
            <person name="Fujiwara T."/>
            <person name="Ono T."/>
            <person name="Yamada K."/>
            <person name="Fujii Y."/>
            <person name="Ozaki K."/>
            <person name="Hirao M."/>
            <person name="Ohmori Y."/>
            <person name="Kawabata A."/>
            <person name="Hikiji T."/>
            <person name="Kobatake N."/>
            <person name="Inagaki H."/>
            <person name="Ikema Y."/>
            <person name="Okamoto S."/>
            <person name="Okitani R."/>
            <person name="Kawakami T."/>
            <person name="Noguchi S."/>
            <person name="Itoh T."/>
            <person name="Shigeta K."/>
            <person name="Senba T."/>
            <person name="Matsumura K."/>
            <person name="Nakajima Y."/>
            <person name="Mizuno T."/>
            <person name="Morinaga M."/>
            <person name="Sasaki M."/>
            <person name="Togashi T."/>
            <person name="Oyama M."/>
            <person name="Hata H."/>
            <person name="Watanabe M."/>
            <person name="Komatsu T."/>
            <person name="Mizushima-Sugano J."/>
            <person name="Satoh T."/>
            <person name="Shirai Y."/>
            <person name="Takahashi Y."/>
            <person name="Nakagawa K."/>
            <person name="Okumura K."/>
            <person name="Nagase T."/>
            <person name="Nomura N."/>
            <person name="Kikuchi H."/>
            <person name="Masuho Y."/>
            <person name="Yamashita R."/>
            <person name="Nakai K."/>
            <person name="Yada T."/>
            <person name="Nakamura Y."/>
            <person name="Ohara O."/>
            <person name="Isogai T."/>
            <person name="Sugano S."/>
        </authorList>
    </citation>
    <scope>NUCLEOTIDE SEQUENCE [LARGE SCALE MRNA] (ISOFORMS 1; 6 AND 7)</scope>
    <source>
        <tissue>Caudate nucleus</tissue>
        <tissue>Teratocarcinoma</tissue>
        <tissue>Testis</tissue>
    </source>
</reference>
<reference key="4">
    <citation type="journal article" date="2005" name="Nature">
        <title>Generation and annotation of the DNA sequences of human chromosomes 2 and 4.</title>
        <authorList>
            <person name="Hillier L.W."/>
            <person name="Graves T.A."/>
            <person name="Fulton R.S."/>
            <person name="Fulton L.A."/>
            <person name="Pepin K.H."/>
            <person name="Minx P."/>
            <person name="Wagner-McPherson C."/>
            <person name="Layman D."/>
            <person name="Wylie K."/>
            <person name="Sekhon M."/>
            <person name="Becker M.C."/>
            <person name="Fewell G.A."/>
            <person name="Delehaunty K.D."/>
            <person name="Miner T.L."/>
            <person name="Nash W.E."/>
            <person name="Kremitzki C."/>
            <person name="Oddy L."/>
            <person name="Du H."/>
            <person name="Sun H."/>
            <person name="Bradshaw-Cordum H."/>
            <person name="Ali J."/>
            <person name="Carter J."/>
            <person name="Cordes M."/>
            <person name="Harris A."/>
            <person name="Isak A."/>
            <person name="van Brunt A."/>
            <person name="Nguyen C."/>
            <person name="Du F."/>
            <person name="Courtney L."/>
            <person name="Kalicki J."/>
            <person name="Ozersky P."/>
            <person name="Abbott S."/>
            <person name="Armstrong J."/>
            <person name="Belter E.A."/>
            <person name="Caruso L."/>
            <person name="Cedroni M."/>
            <person name="Cotton M."/>
            <person name="Davidson T."/>
            <person name="Desai A."/>
            <person name="Elliott G."/>
            <person name="Erb T."/>
            <person name="Fronick C."/>
            <person name="Gaige T."/>
            <person name="Haakenson W."/>
            <person name="Haglund K."/>
            <person name="Holmes A."/>
            <person name="Harkins R."/>
            <person name="Kim K."/>
            <person name="Kruchowski S.S."/>
            <person name="Strong C.M."/>
            <person name="Grewal N."/>
            <person name="Goyea E."/>
            <person name="Hou S."/>
            <person name="Levy A."/>
            <person name="Martinka S."/>
            <person name="Mead K."/>
            <person name="McLellan M.D."/>
            <person name="Meyer R."/>
            <person name="Randall-Maher J."/>
            <person name="Tomlinson C."/>
            <person name="Dauphin-Kohlberg S."/>
            <person name="Kozlowicz-Reilly A."/>
            <person name="Shah N."/>
            <person name="Swearengen-Shahid S."/>
            <person name="Snider J."/>
            <person name="Strong J.T."/>
            <person name="Thompson J."/>
            <person name="Yoakum M."/>
            <person name="Leonard S."/>
            <person name="Pearman C."/>
            <person name="Trani L."/>
            <person name="Radionenko M."/>
            <person name="Waligorski J.E."/>
            <person name="Wang C."/>
            <person name="Rock S.M."/>
            <person name="Tin-Wollam A.-M."/>
            <person name="Maupin R."/>
            <person name="Latreille P."/>
            <person name="Wendl M.C."/>
            <person name="Yang S.-P."/>
            <person name="Pohl C."/>
            <person name="Wallis J.W."/>
            <person name="Spieth J."/>
            <person name="Bieri T.A."/>
            <person name="Berkowicz N."/>
            <person name="Nelson J.O."/>
            <person name="Osborne J."/>
            <person name="Ding L."/>
            <person name="Meyer R."/>
            <person name="Sabo A."/>
            <person name="Shotland Y."/>
            <person name="Sinha P."/>
            <person name="Wohldmann P.E."/>
            <person name="Cook L.L."/>
            <person name="Hickenbotham M.T."/>
            <person name="Eldred J."/>
            <person name="Williams D."/>
            <person name="Jones T.A."/>
            <person name="She X."/>
            <person name="Ciccarelli F.D."/>
            <person name="Izaurralde E."/>
            <person name="Taylor J."/>
            <person name="Schmutz J."/>
            <person name="Myers R.M."/>
            <person name="Cox D.R."/>
            <person name="Huang X."/>
            <person name="McPherson J.D."/>
            <person name="Mardis E.R."/>
            <person name="Clifton S.W."/>
            <person name="Warren W.C."/>
            <person name="Chinwalla A.T."/>
            <person name="Eddy S.R."/>
            <person name="Marra M.A."/>
            <person name="Ovcharenko I."/>
            <person name="Furey T.S."/>
            <person name="Miller W."/>
            <person name="Eichler E.E."/>
            <person name="Bork P."/>
            <person name="Suyama M."/>
            <person name="Torrents D."/>
            <person name="Waterston R.H."/>
            <person name="Wilson R.K."/>
        </authorList>
    </citation>
    <scope>NUCLEOTIDE SEQUENCE [LARGE SCALE GENOMIC DNA]</scope>
</reference>
<reference key="5">
    <citation type="submission" date="2005-09" db="EMBL/GenBank/DDBJ databases">
        <authorList>
            <person name="Mural R.J."/>
            <person name="Istrail S."/>
            <person name="Sutton G.G."/>
            <person name="Florea L."/>
            <person name="Halpern A.L."/>
            <person name="Mobarry C.M."/>
            <person name="Lippert R."/>
            <person name="Walenz B."/>
            <person name="Shatkay H."/>
            <person name="Dew I."/>
            <person name="Miller J.R."/>
            <person name="Flanigan M.J."/>
            <person name="Edwards N.J."/>
            <person name="Bolanos R."/>
            <person name="Fasulo D."/>
            <person name="Halldorsson B.V."/>
            <person name="Hannenhalli S."/>
            <person name="Turner R."/>
            <person name="Yooseph S."/>
            <person name="Lu F."/>
            <person name="Nusskern D.R."/>
            <person name="Shue B.C."/>
            <person name="Zheng X.H."/>
            <person name="Zhong F."/>
            <person name="Delcher A.L."/>
            <person name="Huson D.H."/>
            <person name="Kravitz S.A."/>
            <person name="Mouchard L."/>
            <person name="Reinert K."/>
            <person name="Remington K.A."/>
            <person name="Clark A.G."/>
            <person name="Waterman M.S."/>
            <person name="Eichler E.E."/>
            <person name="Adams M.D."/>
            <person name="Hunkapiller M.W."/>
            <person name="Myers E.W."/>
            <person name="Venter J.C."/>
        </authorList>
    </citation>
    <scope>NUCLEOTIDE SEQUENCE [LARGE SCALE GENOMIC DNA]</scope>
</reference>
<reference key="6">
    <citation type="journal article" date="2004" name="Genome Res.">
        <title>The status, quality, and expansion of the NIH full-length cDNA project: the Mammalian Gene Collection (MGC).</title>
        <authorList>
            <consortium name="The MGC Project Team"/>
        </authorList>
    </citation>
    <scope>NUCLEOTIDE SEQUENCE [LARGE SCALE MRNA] (ISOFORM 1)</scope>
    <source>
        <tissue>Brain</tissue>
    </source>
</reference>
<reference key="7">
    <citation type="journal article" date="2004" name="J. Biol. Chem.">
        <title>Jamip1 (marlin-1) defines a family of proteins interacting with Janus kinases and microtubules.</title>
        <authorList>
            <person name="Steindler C."/>
            <person name="Li Z."/>
            <person name="Algarte M."/>
            <person name="Alcover A."/>
            <person name="Libri V."/>
            <person name="Ragimbeau J."/>
            <person name="Pellegrini S."/>
        </authorList>
    </citation>
    <scope>FUNCTION</scope>
    <scope>INTERACTION WITH JAK1 AND TYK2</scope>
    <scope>OLIGOMERIZATION</scope>
    <scope>SUBCELLULAR LOCATION</scope>
    <scope>PHOSPHORYLATION</scope>
    <scope>TISSUE SPECIFICITY</scope>
</reference>
<reference key="8">
    <citation type="journal article" date="2007" name="Mol. Cell. Neurosci.">
        <title>Marlin-1 and conventional kinesin link GABAB receptors to the cytoskeleton and regulate receptor transport.</title>
        <authorList>
            <person name="Vidal R.L."/>
            <person name="Ramirez O.A."/>
            <person name="Sandoval L."/>
            <person name="Koenig-Robert R."/>
            <person name="Haertel S."/>
            <person name="Couve A."/>
        </authorList>
    </citation>
    <scope>FUNCTION</scope>
    <scope>IDENTIFICATION IN A COMPLEX WITH GABBR1 AND KIF5B</scope>
</reference>
<reference key="9">
    <citation type="journal article" date="2009" name="Sci. Signal.">
        <title>Quantitative phosphoproteomic analysis of T cell receptor signaling reveals system-wide modulation of protein-protein interactions.</title>
        <authorList>
            <person name="Mayya V."/>
            <person name="Lundgren D.H."/>
            <person name="Hwang S.-I."/>
            <person name="Rezaul K."/>
            <person name="Wu L."/>
            <person name="Eng J.K."/>
            <person name="Rodionov V."/>
            <person name="Han D.K."/>
        </authorList>
    </citation>
    <scope>PHOSPHORYLATION [LARGE SCALE ANALYSIS] AT SER-382 AND THR-470</scope>
    <scope>IDENTIFICATION BY MASS SPECTROMETRY [LARGE SCALE ANALYSIS]</scope>
    <source>
        <tissue>Leukemic T-cell</tissue>
    </source>
</reference>
<reference key="10">
    <citation type="journal article" date="2006" name="Science">
        <title>The consensus coding sequences of human breast and colorectal cancers.</title>
        <authorList>
            <person name="Sjoeblom T."/>
            <person name="Jones S."/>
            <person name="Wood L.D."/>
            <person name="Parsons D.W."/>
            <person name="Lin J."/>
            <person name="Barber T.D."/>
            <person name="Mandelker D."/>
            <person name="Leary R.J."/>
            <person name="Ptak J."/>
            <person name="Silliman N."/>
            <person name="Szabo S."/>
            <person name="Buckhaults P."/>
            <person name="Farrell C."/>
            <person name="Meeh P."/>
            <person name="Markowitz S.D."/>
            <person name="Willis J."/>
            <person name="Dawson D."/>
            <person name="Willson J.K.V."/>
            <person name="Gazdar A.F."/>
            <person name="Hartigan J."/>
            <person name="Wu L."/>
            <person name="Liu C."/>
            <person name="Parmigiani G."/>
            <person name="Park B.H."/>
            <person name="Bachman K.E."/>
            <person name="Papadopoulos N."/>
            <person name="Vogelstein B."/>
            <person name="Kinzler K.W."/>
            <person name="Velculescu V.E."/>
        </authorList>
    </citation>
    <scope>VARIANT [LARGE SCALE ANALYSIS] VAL-375</scope>
</reference>
<feature type="chain" id="PRO_0000323008" description="Janus kinase and microtubule-interacting protein 1">
    <location>
        <begin position="1"/>
        <end position="626"/>
    </location>
</feature>
<feature type="region of interest" description="Mediates association with microtubules">
    <location>
        <begin position="1"/>
        <end position="365"/>
    </location>
</feature>
<feature type="region of interest" description="Disordered" evidence="2">
    <location>
        <begin position="1"/>
        <end position="22"/>
    </location>
</feature>
<feature type="region of interest" description="Mediates interaction with TYK2 and GABBR1" evidence="3 4">
    <location>
        <begin position="365"/>
        <end position="626"/>
    </location>
</feature>
<feature type="region of interest" description="Disordered" evidence="2">
    <location>
        <begin position="452"/>
        <end position="477"/>
    </location>
</feature>
<feature type="coiled-coil region" evidence="1">
    <location>
        <begin position="19"/>
        <end position="255"/>
    </location>
</feature>
<feature type="coiled-coil region" evidence="1">
    <location>
        <begin position="284"/>
        <end position="413"/>
    </location>
</feature>
<feature type="coiled-coil region" evidence="1">
    <location>
        <begin position="490"/>
        <end position="604"/>
    </location>
</feature>
<feature type="compositionally biased region" description="Polar residues" evidence="2">
    <location>
        <begin position="452"/>
        <end position="461"/>
    </location>
</feature>
<feature type="modified residue" description="Phosphoserine" evidence="12">
    <location>
        <position position="382"/>
    </location>
</feature>
<feature type="modified residue" description="Phosphothreonine" evidence="12">
    <location>
        <position position="470"/>
    </location>
</feature>
<feature type="splice variant" id="VSP_031989" description="In isoform 6." evidence="8">
    <location>
        <begin position="1"/>
        <end position="208"/>
    </location>
</feature>
<feature type="splice variant" id="VSP_031990" description="In isoform 5 and isoform 7." evidence="8 9">
    <location>
        <begin position="44"/>
        <end position="208"/>
    </location>
</feature>
<feature type="splice variant" id="VSP_031991" description="In isoform 3." evidence="9">
    <original>QASLKRHTSLNDLSLTRDEQEIEFLRLQVLEQQHVIDDLSLERERLLRSKRHRGKSLK</original>
    <variation>HGAAAAGPAENPRTGGQTGVSEAAPERTGGKVFVPFFVFLTSIHSVALMTSVSQELGL</variation>
    <location>
        <begin position="374"/>
        <end position="431"/>
    </location>
</feature>
<feature type="splice variant" id="VSP_031992" description="In isoform 5." evidence="9">
    <location>
        <begin position="415"/>
        <end position="434"/>
    </location>
</feature>
<feature type="splice variant" id="VSP_031993" description="In isoform 3." evidence="9">
    <location>
        <begin position="432"/>
        <end position="626"/>
    </location>
</feature>
<feature type="splice variant" id="VSP_031994" description="In isoform 6." evidence="8">
    <location>
        <begin position="494"/>
        <end position="520"/>
    </location>
</feature>
<feature type="splice variant" id="VSP_031995" description="In isoform 4." evidence="9">
    <original>YQALQRAYALLQEQVGGTLDAEREARTREQLQADLLRCQAKIEDLEKLLVEKGQDSKWVEEKQLLIRTNQDLLEK</original>
    <variation>DLQAAVEKVRRQILRQSREFDSQILRERMELLQQAQQRIRELEDKLEFQKRHLKELEEKFLFLFLFFSLAFILWP</variation>
    <location>
        <begin position="495"/>
        <end position="569"/>
    </location>
</feature>
<feature type="splice variant" id="VSP_031996" description="In isoform 4." evidence="9">
    <location>
        <begin position="570"/>
        <end position="626"/>
    </location>
</feature>
<feature type="splice variant" id="VSP_031997" description="In isoform 2 and isoform 5." evidence="9">
    <original>VRDSICCKLSNGADILFEPKLKFM</original>
    <variation>ERERRSPAFNLQITTFPENHSSALQLFCHQEGVKDVNVSELMKKLDILGDNGNLRNEEQVAIIQAGTVLALCEKWLKQIEGTEAALTQKMLDLEKEKDLFSRQKGYLEEELDYRKQALDQAYLKIQDLEATLYTALQQEPGRRAGEALSEGQREDLQAAVEKVRRQILRQSREFDSQILRERMELLQQAQQRIRELEDKLEFQKRHLKELEEKFLFLFLFFSLAFILWP</variation>
    <location>
        <begin position="603"/>
        <end position="626"/>
    </location>
</feature>
<feature type="sequence variant" id="VAR_039471" description="In dbSNP:rs772311401." evidence="7">
    <original>K</original>
    <variation>R</variation>
    <location>
        <position position="251"/>
    </location>
</feature>
<feature type="sequence variant" id="VAR_039472" description="In a colorectal cancer sample; somatic mutation; dbSNP:rs199693515." evidence="5">
    <original>A</original>
    <variation>V</variation>
    <location>
        <position position="375"/>
    </location>
</feature>
<feature type="sequence conflict" description="In Ref. 6; AAH47075." evidence="10" ref="6">
    <original>K</original>
    <variation>N</variation>
    <location>
        <position position="163"/>
    </location>
</feature>
<name>JKIP1_HUMAN</name>
<protein>
    <recommendedName>
        <fullName>Janus kinase and microtubule-interacting protein 1</fullName>
    </recommendedName>
    <alternativeName>
        <fullName>GABA-B receptor-binding protein</fullName>
    </alternativeName>
    <alternativeName>
        <fullName>Multiple alpha-helices and RNA-linker protein 1</fullName>
        <shortName>Marlin-1</shortName>
    </alternativeName>
</protein>
<keyword id="KW-0025">Alternative splicing</keyword>
<keyword id="KW-0175">Coiled coil</keyword>
<keyword id="KW-0963">Cytoplasm</keyword>
<keyword id="KW-0206">Cytoskeleton</keyword>
<keyword id="KW-0472">Membrane</keyword>
<keyword id="KW-0493">Microtubule</keyword>
<keyword id="KW-0597">Phosphoprotein</keyword>
<keyword id="KW-0653">Protein transport</keyword>
<keyword id="KW-1267">Proteomics identification</keyword>
<keyword id="KW-1185">Reference proteome</keyword>
<keyword id="KW-0813">Transport</keyword>
<proteinExistence type="evidence at protein level"/>
<accession>Q96N16</accession>
<accession>A6H2J2</accession>
<accession>A6H2J3</accession>
<accession>A6H2J4</accession>
<accession>A6H2J5</accession>
<accession>A8MTK6</accession>
<accession>B4DHZ8</accession>
<accession>B8ZZR7</accession>
<accession>D3DVT0</accession>
<accession>Q86Y69</accession>
<accession>Q8N7G3</accession>
<evidence type="ECO:0000255" key="1"/>
<evidence type="ECO:0000256" key="2">
    <source>
        <dbReference type="SAM" id="MobiDB-lite"/>
    </source>
</evidence>
<evidence type="ECO:0000269" key="3">
    <source>
    </source>
</evidence>
<evidence type="ECO:0000269" key="4">
    <source>
    </source>
</evidence>
<evidence type="ECO:0000269" key="5">
    <source>
    </source>
</evidence>
<evidence type="ECO:0000269" key="6">
    <source>
    </source>
</evidence>
<evidence type="ECO:0000269" key="7">
    <source>
    </source>
</evidence>
<evidence type="ECO:0000303" key="8">
    <source>
    </source>
</evidence>
<evidence type="ECO:0000303" key="9">
    <source>
    </source>
</evidence>
<evidence type="ECO:0000305" key="10"/>
<evidence type="ECO:0000305" key="11">
    <source>
    </source>
</evidence>
<evidence type="ECO:0007744" key="12">
    <source>
    </source>
</evidence>
<dbReference type="EMBL" id="AY382340">
    <property type="protein sequence ID" value="AAR26235.1"/>
    <property type="molecule type" value="mRNA"/>
</dbReference>
<dbReference type="EMBL" id="AM412307">
    <property type="protein sequence ID" value="CAL80778.1"/>
    <property type="molecule type" value="mRNA"/>
</dbReference>
<dbReference type="EMBL" id="AM412308">
    <property type="protein sequence ID" value="CAL80779.1"/>
    <property type="molecule type" value="mRNA"/>
</dbReference>
<dbReference type="EMBL" id="AM412309">
    <property type="protein sequence ID" value="CAL80780.1"/>
    <property type="molecule type" value="mRNA"/>
</dbReference>
<dbReference type="EMBL" id="AM412310">
    <property type="protein sequence ID" value="CAL80781.1"/>
    <property type="molecule type" value="mRNA"/>
</dbReference>
<dbReference type="EMBL" id="AK056126">
    <property type="protein sequence ID" value="BAB71098.1"/>
    <property type="molecule type" value="mRNA"/>
</dbReference>
<dbReference type="EMBL" id="AK098536">
    <property type="protein sequence ID" value="BAC05325.1"/>
    <property type="status" value="ALT_SEQ"/>
    <property type="molecule type" value="mRNA"/>
</dbReference>
<dbReference type="EMBL" id="AK295339">
    <property type="protein sequence ID" value="BAG58310.1"/>
    <property type="molecule type" value="mRNA"/>
</dbReference>
<dbReference type="EMBL" id="AC092442">
    <property type="status" value="NOT_ANNOTATED_CDS"/>
    <property type="molecule type" value="Genomic_DNA"/>
</dbReference>
<dbReference type="EMBL" id="AC113615">
    <property type="status" value="NOT_ANNOTATED_CDS"/>
    <property type="molecule type" value="Genomic_DNA"/>
</dbReference>
<dbReference type="EMBL" id="CH471131">
    <property type="protein sequence ID" value="EAW82401.1"/>
    <property type="molecule type" value="Genomic_DNA"/>
</dbReference>
<dbReference type="EMBL" id="CH471131">
    <property type="protein sequence ID" value="EAW82402.1"/>
    <property type="molecule type" value="Genomic_DNA"/>
</dbReference>
<dbReference type="EMBL" id="BC047075">
    <property type="protein sequence ID" value="AAH47075.1"/>
    <property type="molecule type" value="mRNA"/>
</dbReference>
<dbReference type="CCDS" id="CCDS3385.1">
    <molecule id="Q96N16-1"/>
</dbReference>
<dbReference type="CCDS" id="CCDS47005.1">
    <molecule id="Q96N16-2"/>
</dbReference>
<dbReference type="CCDS" id="CCDS77897.1">
    <molecule id="Q96N16-7"/>
</dbReference>
<dbReference type="RefSeq" id="NP_001092903.1">
    <molecule id="Q96N16-2"/>
    <property type="nucleotide sequence ID" value="NM_001099433.2"/>
</dbReference>
<dbReference type="RefSeq" id="NP_001293062.1">
    <molecule id="Q96N16-1"/>
    <property type="nucleotide sequence ID" value="NM_001306133.2"/>
</dbReference>
<dbReference type="RefSeq" id="NP_001293063.1">
    <molecule id="Q96N16-7"/>
    <property type="nucleotide sequence ID" value="NM_001306134.2"/>
</dbReference>
<dbReference type="RefSeq" id="NP_653321.1">
    <molecule id="Q96N16-1"/>
    <property type="nucleotide sequence ID" value="NM_144720.4"/>
</dbReference>
<dbReference type="RefSeq" id="XP_011511702.1">
    <property type="nucleotide sequence ID" value="XM_011513400.2"/>
</dbReference>
<dbReference type="RefSeq" id="XP_016863282.1">
    <property type="nucleotide sequence ID" value="XM_017007793.1"/>
</dbReference>
<dbReference type="SMR" id="Q96N16"/>
<dbReference type="BioGRID" id="127465">
    <property type="interactions" value="45"/>
</dbReference>
<dbReference type="FunCoup" id="Q96N16">
    <property type="interactions" value="157"/>
</dbReference>
<dbReference type="IntAct" id="Q96N16">
    <property type="interactions" value="39"/>
</dbReference>
<dbReference type="MINT" id="Q96N16"/>
<dbReference type="STRING" id="9606.ENSP00000386711"/>
<dbReference type="iPTMnet" id="Q96N16"/>
<dbReference type="PhosphoSitePlus" id="Q96N16"/>
<dbReference type="BioMuta" id="JAKMIP1"/>
<dbReference type="DMDM" id="74732477"/>
<dbReference type="jPOST" id="Q96N16"/>
<dbReference type="MassIVE" id="Q96N16"/>
<dbReference type="PaxDb" id="9606-ENSP00000386711"/>
<dbReference type="PeptideAtlas" id="Q96N16"/>
<dbReference type="ProteomicsDB" id="4263"/>
<dbReference type="ProteomicsDB" id="77442">
    <molecule id="Q96N16-1"/>
</dbReference>
<dbReference type="ProteomicsDB" id="77443">
    <molecule id="Q96N16-2"/>
</dbReference>
<dbReference type="ProteomicsDB" id="77444">
    <molecule id="Q96N16-3"/>
</dbReference>
<dbReference type="ProteomicsDB" id="77445">
    <molecule id="Q96N16-4"/>
</dbReference>
<dbReference type="ProteomicsDB" id="77446">
    <molecule id="Q96N16-5"/>
</dbReference>
<dbReference type="ProteomicsDB" id="77447">
    <molecule id="Q96N16-6"/>
</dbReference>
<dbReference type="Antibodypedia" id="22639">
    <property type="antibodies" value="166 antibodies from 27 providers"/>
</dbReference>
<dbReference type="DNASU" id="152789"/>
<dbReference type="Ensembl" id="ENST00000282924.9">
    <molecule id="Q96N16-1"/>
    <property type="protein sequence ID" value="ENSP00000282924.5"/>
    <property type="gene ID" value="ENSG00000152969.21"/>
</dbReference>
<dbReference type="Ensembl" id="ENST00000409021.9">
    <molecule id="Q96N16-2"/>
    <property type="protein sequence ID" value="ENSP00000386711.3"/>
    <property type="gene ID" value="ENSG00000152969.21"/>
</dbReference>
<dbReference type="Ensembl" id="ENST00000409371.8">
    <molecule id="Q96N16-5"/>
    <property type="protein sequence ID" value="ENSP00000387042.3"/>
    <property type="gene ID" value="ENSG00000152969.21"/>
</dbReference>
<dbReference type="Ensembl" id="ENST00000409831.5">
    <molecule id="Q96N16-1"/>
    <property type="protein sequence ID" value="ENSP00000386925.1"/>
    <property type="gene ID" value="ENSG00000152969.21"/>
</dbReference>
<dbReference type="Ensembl" id="ENST00000410077.2">
    <molecule id="Q96N16-7"/>
    <property type="protein sequence ID" value="ENSP00000386745.2"/>
    <property type="gene ID" value="ENSG00000152969.21"/>
</dbReference>
<dbReference type="GeneID" id="152789"/>
<dbReference type="KEGG" id="hsa:152789"/>
<dbReference type="MANE-Select" id="ENST00000409021.9">
    <molecule id="Q96N16-2"/>
    <property type="protein sequence ID" value="ENSP00000386711.3"/>
    <property type="RefSeq nucleotide sequence ID" value="NM_001099433.2"/>
    <property type="RefSeq protein sequence ID" value="NP_001092903.1"/>
</dbReference>
<dbReference type="UCSC" id="uc003giu.5">
    <molecule id="Q96N16-1"/>
    <property type="organism name" value="human"/>
</dbReference>
<dbReference type="AGR" id="HGNC:26460"/>
<dbReference type="CTD" id="152789"/>
<dbReference type="DisGeNET" id="152789"/>
<dbReference type="GeneCards" id="JAKMIP1"/>
<dbReference type="HGNC" id="HGNC:26460">
    <property type="gene designation" value="JAKMIP1"/>
</dbReference>
<dbReference type="HPA" id="ENSG00000152969">
    <property type="expression patterns" value="Tissue enriched (brain)"/>
</dbReference>
<dbReference type="MalaCards" id="JAKMIP1"/>
<dbReference type="MIM" id="611195">
    <property type="type" value="gene"/>
</dbReference>
<dbReference type="neXtProt" id="NX_Q96N16"/>
<dbReference type="OpenTargets" id="ENSG00000152969"/>
<dbReference type="PharmGKB" id="PA143485508"/>
<dbReference type="VEuPathDB" id="HostDB:ENSG00000152969"/>
<dbReference type="eggNOG" id="ENOG502QS6X">
    <property type="taxonomic scope" value="Eukaryota"/>
</dbReference>
<dbReference type="GeneTree" id="ENSGT00940000153713"/>
<dbReference type="HOGENOM" id="CLU_020294_1_0_1"/>
<dbReference type="InParanoid" id="Q96N16"/>
<dbReference type="OMA" id="QMCALQQ"/>
<dbReference type="OrthoDB" id="6424487at2759"/>
<dbReference type="PAN-GO" id="Q96N16">
    <property type="GO annotations" value="1 GO annotation based on evolutionary models"/>
</dbReference>
<dbReference type="PhylomeDB" id="Q96N16"/>
<dbReference type="TreeFam" id="TF331900"/>
<dbReference type="PathwayCommons" id="Q96N16"/>
<dbReference type="SignaLink" id="Q96N16"/>
<dbReference type="SIGNOR" id="Q96N16"/>
<dbReference type="BioGRID-ORCS" id="152789">
    <property type="hits" value="9 hits in 1153 CRISPR screens"/>
</dbReference>
<dbReference type="GenomeRNAi" id="152789"/>
<dbReference type="Pharos" id="Q96N16">
    <property type="development level" value="Tbio"/>
</dbReference>
<dbReference type="PRO" id="PR:Q96N16"/>
<dbReference type="Proteomes" id="UP000005640">
    <property type="component" value="Chromosome 4"/>
</dbReference>
<dbReference type="RNAct" id="Q96N16">
    <property type="molecule type" value="protein"/>
</dbReference>
<dbReference type="Bgee" id="ENSG00000152969">
    <property type="expression patterns" value="Expressed in caudate nucleus and 125 other cell types or tissues"/>
</dbReference>
<dbReference type="ExpressionAtlas" id="Q96N16">
    <property type="expression patterns" value="baseline and differential"/>
</dbReference>
<dbReference type="GO" id="GO:0005737">
    <property type="term" value="C:cytoplasm"/>
    <property type="evidence" value="ECO:0007669"/>
    <property type="project" value="UniProtKB-KW"/>
</dbReference>
<dbReference type="GO" id="GO:0016020">
    <property type="term" value="C:membrane"/>
    <property type="evidence" value="ECO:0000314"/>
    <property type="project" value="MGI"/>
</dbReference>
<dbReference type="GO" id="GO:0005874">
    <property type="term" value="C:microtubule"/>
    <property type="evidence" value="ECO:0007669"/>
    <property type="project" value="UniProtKB-KW"/>
</dbReference>
<dbReference type="GO" id="GO:1990904">
    <property type="term" value="C:ribonucleoprotein complex"/>
    <property type="evidence" value="ECO:0000314"/>
    <property type="project" value="MGI"/>
</dbReference>
<dbReference type="GO" id="GO:0050811">
    <property type="term" value="F:GABA receptor binding"/>
    <property type="evidence" value="ECO:0000314"/>
    <property type="project" value="MGI"/>
</dbReference>
<dbReference type="GO" id="GO:0019900">
    <property type="term" value="F:kinase binding"/>
    <property type="evidence" value="ECO:0007669"/>
    <property type="project" value="InterPro"/>
</dbReference>
<dbReference type="GO" id="GO:0008017">
    <property type="term" value="F:microtubule binding"/>
    <property type="evidence" value="ECO:0007669"/>
    <property type="project" value="InterPro"/>
</dbReference>
<dbReference type="GO" id="GO:0003723">
    <property type="term" value="F:RNA binding"/>
    <property type="evidence" value="ECO:0000314"/>
    <property type="project" value="MGI"/>
</dbReference>
<dbReference type="GO" id="GO:0050890">
    <property type="term" value="P:cognition"/>
    <property type="evidence" value="ECO:0000315"/>
    <property type="project" value="UniProtKB"/>
</dbReference>
<dbReference type="GO" id="GO:0015031">
    <property type="term" value="P:protein transport"/>
    <property type="evidence" value="ECO:0007669"/>
    <property type="project" value="UniProtKB-KW"/>
</dbReference>
<dbReference type="InterPro" id="IPR024836">
    <property type="entry name" value="JAKMIP"/>
</dbReference>
<dbReference type="InterPro" id="IPR031994">
    <property type="entry name" value="JAKMIP_C"/>
</dbReference>
<dbReference type="PANTHER" id="PTHR18935">
    <property type="entry name" value="GOLGIN SUBFAMILY A MEMBER 4-LIKE ISOFORM X1"/>
    <property type="match status" value="1"/>
</dbReference>
<dbReference type="PANTHER" id="PTHR18935:SF6">
    <property type="entry name" value="JANUS KINASE AND MICROTUBULE-INTERACTING PROTEIN 1"/>
    <property type="match status" value="1"/>
</dbReference>
<dbReference type="Pfam" id="PF16034">
    <property type="entry name" value="JAKMIP_CC3"/>
    <property type="match status" value="1"/>
</dbReference>
<comment type="function">
    <text evidence="3 4 6">Associates with microtubules and may play a role in the microtubule-dependent transport of the GABA-B receptor. May play a role in JAK1 signaling and regulate microtubule cytoskeleton rearrangements.</text>
</comment>
<comment type="subunit">
    <text evidence="3 4 6">Homodimer. Forms a complex with GABBR1 and KIF5B/kinesin-1. Interacts with JAK1 and TYK2.</text>
</comment>
<comment type="interaction">
    <interactant intactId="EBI-2680803">
        <id>Q96N16</id>
    </interactant>
    <interactant intactId="EBI-742108">
        <id>Q96B23</id>
        <label>ARK2N</label>
    </interactant>
    <organismsDiffer>false</organismsDiffer>
    <experiments>3</experiments>
</comment>
<comment type="interaction">
    <interactant intactId="EBI-2680803">
        <id>Q96N16</id>
    </interactant>
    <interactant intactId="EBI-2105445">
        <id>P51451</id>
        <label>BLK</label>
    </interactant>
    <organismsDiffer>false</organismsDiffer>
    <experiments>3</experiments>
</comment>
<comment type="interaction">
    <interactant intactId="EBI-2680803">
        <id>Q96N16</id>
    </interactant>
    <interactant intactId="EBI-712912">
        <id>Q9HC52</id>
        <label>CBX8</label>
    </interactant>
    <organismsDiffer>false</organismsDiffer>
    <experiments>3</experiments>
</comment>
<comment type="interaction">
    <interactant intactId="EBI-2680803">
        <id>Q96N16</id>
    </interactant>
    <interactant intactId="EBI-351257">
        <id>P26196</id>
        <label>DDX6</label>
    </interactant>
    <organismsDiffer>false</organismsDiffer>
    <experiments>3</experiments>
</comment>
<comment type="interaction">
    <interactant intactId="EBI-2680803">
        <id>Q96N16</id>
    </interactant>
    <interactant intactId="EBI-744099">
        <id>Q9H0I2</id>
        <label>ENKD1</label>
    </interactant>
    <organismsDiffer>false</organismsDiffer>
    <experiments>3</experiments>
</comment>
<comment type="interaction">
    <interactant intactId="EBI-2680803">
        <id>Q96N16</id>
    </interactant>
    <interactant intactId="EBI-466029">
        <id>P42858</id>
        <label>HTT</label>
    </interactant>
    <organismsDiffer>false</organismsDiffer>
    <experiments>10</experiments>
</comment>
<comment type="interaction">
    <interactant intactId="EBI-2680803">
        <id>Q96N16</id>
    </interactant>
    <interactant intactId="EBI-17178971">
        <id>Q14005-2</id>
        <label>IL16</label>
    </interactant>
    <organismsDiffer>false</organismsDiffer>
    <experiments>3</experiments>
</comment>
<comment type="interaction">
    <interactant intactId="EBI-2680803">
        <id>Q96N16</id>
    </interactant>
    <interactant intactId="EBI-348259">
        <id>Q96EZ8</id>
        <label>MCRS1</label>
    </interactant>
    <organismsDiffer>false</organismsDiffer>
    <experiments>3</experiments>
</comment>
<comment type="interaction">
    <interactant intactId="EBI-2680803">
        <id>Q96N16</id>
    </interactant>
    <interactant intactId="EBI-5453723">
        <id>Q9Y3B7</id>
        <label>MRPL11</label>
    </interactant>
    <organismsDiffer>false</organismsDiffer>
    <experiments>3</experiments>
</comment>
<comment type="interaction">
    <interactant intactId="EBI-2680803">
        <id>Q96N16</id>
    </interactant>
    <interactant intactId="EBI-372273">
        <id>P20618</id>
        <label>PSMB1</label>
    </interactant>
    <organismsDiffer>false</organismsDiffer>
    <experiments>3</experiments>
</comment>
<comment type="interaction">
    <interactant intactId="EBI-2680803">
        <id>Q96N16</id>
    </interactant>
    <interactant intactId="EBI-748391">
        <id>Q9BWG6</id>
        <label>SCNM1</label>
    </interactant>
    <organismsDiffer>false</organismsDiffer>
    <experiments>3</experiments>
</comment>
<comment type="interaction">
    <interactant intactId="EBI-2680803">
        <id>Q96N16</id>
    </interactant>
    <interactant intactId="EBI-10241197">
        <id>Q3SY00</id>
        <label>TSGA10IP</label>
    </interactant>
    <organismsDiffer>false</organismsDiffer>
    <experiments>3</experiments>
</comment>
<comment type="interaction">
    <interactant intactId="EBI-2680803">
        <id>Q96N16</id>
    </interactant>
    <interactant intactId="EBI-743272">
        <id>O75604</id>
        <label>USP2</label>
    </interactant>
    <organismsDiffer>false</organismsDiffer>
    <experiments>3</experiments>
</comment>
<comment type="interaction">
    <interactant intactId="EBI-2680803">
        <id>Q96N16</id>
    </interactant>
    <interactant intactId="EBI-515331">
        <id>P07947</id>
        <label>YES1</label>
    </interactant>
    <organismsDiffer>false</organismsDiffer>
    <experiments>3</experiments>
</comment>
<comment type="interaction">
    <interactant intactId="EBI-2680803">
        <id>Q96N16</id>
    </interactant>
    <interactant intactId="EBI-2557592">
        <id>Q9UHR6</id>
        <label>ZNHIT2</label>
    </interactant>
    <organismsDiffer>false</organismsDiffer>
    <experiments>3</experiments>
</comment>
<comment type="interaction">
    <interactant intactId="EBI-2680803">
        <id>Q96N16</id>
    </interactant>
    <interactant intactId="EBI-25475888">
        <id>PRO_0000449630</id>
        <label>rep</label>
        <dbReference type="UniProtKB" id="P0DTD1"/>
    </interactant>
    <organismsDiffer>true</organismsDiffer>
    <experiments>3</experiments>
</comment>
<comment type="subcellular location">
    <subcellularLocation>
        <location>Cytoplasm</location>
        <location>Cytoskeleton</location>
    </subcellularLocation>
    <subcellularLocation>
        <location>Membrane</location>
        <topology>Peripheral membrane protein</topology>
    </subcellularLocation>
    <text>Colocalizes with the microtubule network. Localizes to the cell body and neurites of hippocampal neurons where it accumulates in granules. Localizes to the tail and to a lower extent to the head of sperm cells.</text>
</comment>
<comment type="alternative products">
    <event type="alternative splicing"/>
    <isoform>
        <id>Q96N16-1</id>
        <name>1</name>
        <name>Jakmip1A</name>
        <sequence type="displayed"/>
    </isoform>
    <isoform>
        <id>Q96N16-2</id>
        <name>2</name>
        <name>Jakmip1B</name>
        <sequence type="described" ref="VSP_031997"/>
    </isoform>
    <isoform>
        <id>Q96N16-3</id>
        <name>3</name>
        <name>Jakmip1C</name>
        <sequence type="described" ref="VSP_031991 VSP_031993"/>
    </isoform>
    <isoform>
        <id>Q96N16-4</id>
        <name>4</name>
        <name>Jakmip1D</name>
        <sequence type="described" ref="VSP_031995 VSP_031996"/>
    </isoform>
    <isoform>
        <id>Q96N16-5</id>
        <name>5</name>
        <name>Jakmip1E</name>
        <sequence type="described" ref="VSP_031990 VSP_031992 VSP_031997"/>
    </isoform>
    <isoform>
        <id>Q96N16-6</id>
        <name>6</name>
        <sequence type="described" ref="VSP_031989 VSP_031994"/>
    </isoform>
    <isoform>
        <id>Q96N16-7</id>
        <name>7</name>
        <sequence type="described" ref="VSP_031990"/>
    </isoform>
</comment>
<comment type="tissue specificity">
    <text evidence="4 7">Predominantly expressed in neural tissues and lymphoid cells (at protein level). Isoform 2, isoform 3 and isoform 4 are specifically expressed in brain and retina. Isoform 1 and isoform 5 are also detected in liver, lung and skeletal muscle. Also detected in testis and to a lower extent spleen and intestine.</text>
</comment>
<comment type="miscellaneous">
    <molecule>Isoform 3</molecule>
    <text evidence="10">Dubious isoform produced through aberrant splice sites.</text>
</comment>
<comment type="miscellaneous">
    <molecule>Isoform 4</molecule>
    <text evidence="10">Dubious isoform produced through aberrant splice sites.</text>
</comment>
<comment type="similarity">
    <text evidence="10">Belongs to the JAKMIP family.</text>
</comment>
<comment type="caution">
    <text evidence="11">Was originally thought to bind single-stranded RNA molecules and regulate GABA-B receptor expression.</text>
</comment>
<comment type="sequence caution" evidence="10">
    <conflict type="erroneous termination">
        <sequence resource="EMBL-CDS" id="BAC05325"/>
    </conflict>
    <text>Truncated C-terminus.</text>
</comment>
<comment type="sequence caution" evidence="10">
    <conflict type="erroneous translation">
        <sequence resource="EMBL-CDS" id="BAC05325"/>
    </conflict>
    <text>Wrong choice of CDS.</text>
</comment>
<sequence>MSKKGRSKGEKPEMETDAVQMANEELRAKLTSIQIEFQQEKSKVGKLRERLQEAKLEREQEQRRHTAYISELKAKLHEEKTKELQALREGLIRQHEQEAARTAKIKEGELQRLQATLNVLRDGAADKVKTALLTEAREEARRAFDGERLRLQQEILELKAARKQAEEALSNCMQADKTKAADLRAAYQAHQDEVHRIKRECERDIRRLMDEIKGKDRVILALEKELGVQAGQTQKLLLQKEALDEQLVQVKEAERHHSSPKRELPPGIGDMVELMGVQDQHMDERDVRRFQLKIAELNSVIRKLEDRNTLLADERNELLKRSRETEVQLKPLVEKNKRMNKKNEDLLQSIQRMEEKIKNLTRENVEMKEKLSAQASLKRHTSLNDLSLTRDEQEIEFLRLQVLEQQHVIDDLSLERERLLRSKRHRGKSLKPPKKHVVETFFGFDEESVDSETLSETSYNTDRTDRTPATPEEDLDDATAREEADLRFCQLTREYQALQRAYALLQEQVGGTLDAEREARTREQLQADLLRCQAKIEDLEKLLVEKGQDSKWVEEKQLLIRTNQDLLEKIYRLEMEENQLKNEMQDAKDQNELLEFRVLELEVRDSICCKLSNGADILFEPKLKFM</sequence>